<evidence type="ECO:0000250" key="1"/>
<evidence type="ECO:0000255" key="2"/>
<evidence type="ECO:0000305" key="3"/>
<protein>
    <recommendedName>
        <fullName>Probable cytochrome P450 519E1</fullName>
        <ecNumber>1.14.-.-</ecNumber>
    </recommendedName>
</protein>
<comment type="cofactor">
    <cofactor evidence="1">
        <name>heme</name>
        <dbReference type="ChEBI" id="CHEBI:30413"/>
    </cofactor>
</comment>
<comment type="subcellular location">
    <subcellularLocation>
        <location evidence="3">Membrane</location>
        <topology evidence="3">Single-pass membrane protein</topology>
    </subcellularLocation>
</comment>
<comment type="similarity">
    <text evidence="3">Belongs to the cytochrome P450 family.</text>
</comment>
<feature type="chain" id="PRO_0000318836" description="Probable cytochrome P450 519E1">
    <location>
        <begin position="1"/>
        <end position="506"/>
    </location>
</feature>
<feature type="transmembrane region" description="Helical" evidence="2">
    <location>
        <begin position="1"/>
        <end position="21"/>
    </location>
</feature>
<feature type="binding site" description="axial binding residue" evidence="1">
    <location>
        <position position="453"/>
    </location>
    <ligand>
        <name>heme</name>
        <dbReference type="ChEBI" id="CHEBI:30413"/>
    </ligand>
    <ligandPart>
        <name>Fe</name>
        <dbReference type="ChEBI" id="CHEBI:18248"/>
    </ligandPart>
</feature>
<reference key="1">
    <citation type="journal article" date="2005" name="Nature">
        <title>The genome of the social amoeba Dictyostelium discoideum.</title>
        <authorList>
            <person name="Eichinger L."/>
            <person name="Pachebat J.A."/>
            <person name="Gloeckner G."/>
            <person name="Rajandream M.A."/>
            <person name="Sucgang R."/>
            <person name="Berriman M."/>
            <person name="Song J."/>
            <person name="Olsen R."/>
            <person name="Szafranski K."/>
            <person name="Xu Q."/>
            <person name="Tunggal B."/>
            <person name="Kummerfeld S."/>
            <person name="Madera M."/>
            <person name="Konfortov B.A."/>
            <person name="Rivero F."/>
            <person name="Bankier A.T."/>
            <person name="Lehmann R."/>
            <person name="Hamlin N."/>
            <person name="Davies R."/>
            <person name="Gaudet P."/>
            <person name="Fey P."/>
            <person name="Pilcher K."/>
            <person name="Chen G."/>
            <person name="Saunders D."/>
            <person name="Sodergren E.J."/>
            <person name="Davis P."/>
            <person name="Kerhornou A."/>
            <person name="Nie X."/>
            <person name="Hall N."/>
            <person name="Anjard C."/>
            <person name="Hemphill L."/>
            <person name="Bason N."/>
            <person name="Farbrother P."/>
            <person name="Desany B."/>
            <person name="Just E."/>
            <person name="Morio T."/>
            <person name="Rost R."/>
            <person name="Churcher C.M."/>
            <person name="Cooper J."/>
            <person name="Haydock S."/>
            <person name="van Driessche N."/>
            <person name="Cronin A."/>
            <person name="Goodhead I."/>
            <person name="Muzny D.M."/>
            <person name="Mourier T."/>
            <person name="Pain A."/>
            <person name="Lu M."/>
            <person name="Harper D."/>
            <person name="Lindsay R."/>
            <person name="Hauser H."/>
            <person name="James K.D."/>
            <person name="Quiles M."/>
            <person name="Madan Babu M."/>
            <person name="Saito T."/>
            <person name="Buchrieser C."/>
            <person name="Wardroper A."/>
            <person name="Felder M."/>
            <person name="Thangavelu M."/>
            <person name="Johnson D."/>
            <person name="Knights A."/>
            <person name="Loulseged H."/>
            <person name="Mungall K.L."/>
            <person name="Oliver K."/>
            <person name="Price C."/>
            <person name="Quail M.A."/>
            <person name="Urushihara H."/>
            <person name="Hernandez J."/>
            <person name="Rabbinowitsch E."/>
            <person name="Steffen D."/>
            <person name="Sanders M."/>
            <person name="Ma J."/>
            <person name="Kohara Y."/>
            <person name="Sharp S."/>
            <person name="Simmonds M.N."/>
            <person name="Spiegler S."/>
            <person name="Tivey A."/>
            <person name="Sugano S."/>
            <person name="White B."/>
            <person name="Walker D."/>
            <person name="Woodward J.R."/>
            <person name="Winckler T."/>
            <person name="Tanaka Y."/>
            <person name="Shaulsky G."/>
            <person name="Schleicher M."/>
            <person name="Weinstock G.M."/>
            <person name="Rosenthal A."/>
            <person name="Cox E.C."/>
            <person name="Chisholm R.L."/>
            <person name="Gibbs R.A."/>
            <person name="Loomis W.F."/>
            <person name="Platzer M."/>
            <person name="Kay R.R."/>
            <person name="Williams J.G."/>
            <person name="Dear P.H."/>
            <person name="Noegel A.A."/>
            <person name="Barrell B.G."/>
            <person name="Kuspa A."/>
        </authorList>
    </citation>
    <scope>NUCLEOTIDE SEQUENCE [LARGE SCALE GENOMIC DNA]</scope>
    <source>
        <strain>AX4</strain>
    </source>
</reference>
<organism>
    <name type="scientific">Dictyostelium discoideum</name>
    <name type="common">Social amoeba</name>
    <dbReference type="NCBI Taxonomy" id="44689"/>
    <lineage>
        <taxon>Eukaryota</taxon>
        <taxon>Amoebozoa</taxon>
        <taxon>Evosea</taxon>
        <taxon>Eumycetozoa</taxon>
        <taxon>Dictyostelia</taxon>
        <taxon>Dictyosteliales</taxon>
        <taxon>Dictyosteliaceae</taxon>
        <taxon>Dictyostelium</taxon>
    </lineage>
</organism>
<accession>Q54LT7</accession>
<dbReference type="EC" id="1.14.-.-"/>
<dbReference type="EMBL" id="AAFI02000085">
    <property type="protein sequence ID" value="EAL64234.1"/>
    <property type="molecule type" value="Genomic_DNA"/>
</dbReference>
<dbReference type="RefSeq" id="XP_637743.1">
    <property type="nucleotide sequence ID" value="XM_632651.1"/>
</dbReference>
<dbReference type="SMR" id="Q54LT7"/>
<dbReference type="FunCoup" id="Q54LT7">
    <property type="interactions" value="10"/>
</dbReference>
<dbReference type="STRING" id="44689.Q54LT7"/>
<dbReference type="PaxDb" id="44689-DDB0233026"/>
<dbReference type="EnsemblProtists" id="EAL64234">
    <property type="protein sequence ID" value="EAL64234"/>
    <property type="gene ID" value="DDB_G0286419"/>
</dbReference>
<dbReference type="GeneID" id="8625609"/>
<dbReference type="KEGG" id="ddi:DDB_G0286419"/>
<dbReference type="dictyBase" id="DDB_G0286419">
    <property type="gene designation" value="cyp519E1"/>
</dbReference>
<dbReference type="VEuPathDB" id="AmoebaDB:DDB_G0286419"/>
<dbReference type="eggNOG" id="KOG0156">
    <property type="taxonomic scope" value="Eukaryota"/>
</dbReference>
<dbReference type="HOGENOM" id="CLU_001570_4_0_1"/>
<dbReference type="InParanoid" id="Q54LT7"/>
<dbReference type="OMA" id="FRIAPWH"/>
<dbReference type="PhylomeDB" id="Q54LT7"/>
<dbReference type="Reactome" id="R-DDI-211935">
    <property type="pathway name" value="Fatty acids"/>
</dbReference>
<dbReference type="Reactome" id="R-DDI-211945">
    <property type="pathway name" value="Phase I - Functionalization of compounds"/>
</dbReference>
<dbReference type="Reactome" id="R-DDI-211958">
    <property type="pathway name" value="Miscellaneous substrates"/>
</dbReference>
<dbReference type="Reactome" id="R-DDI-211981">
    <property type="pathway name" value="Xenobiotics"/>
</dbReference>
<dbReference type="Reactome" id="R-DDI-211999">
    <property type="pathway name" value="CYP2E1 reactions"/>
</dbReference>
<dbReference type="Reactome" id="R-DDI-2142670">
    <property type="pathway name" value="Synthesis of epoxy (EET) and dihydroxyeicosatrienoic acids (DHET)"/>
</dbReference>
<dbReference type="Reactome" id="R-DDI-2142816">
    <property type="pathway name" value="Synthesis of (16-20)-hydroxyeicosatetraenoic acids (HETE)"/>
</dbReference>
<dbReference type="Reactome" id="R-DDI-5423646">
    <property type="pathway name" value="Aflatoxin activation and detoxification"/>
</dbReference>
<dbReference type="Reactome" id="R-DDI-9027307">
    <property type="pathway name" value="Biosynthesis of maresin-like SPMs"/>
</dbReference>
<dbReference type="Reactome" id="R-DDI-9749641">
    <property type="pathway name" value="Aspirin ADME"/>
</dbReference>
<dbReference type="Reactome" id="R-DDI-9753281">
    <property type="pathway name" value="Paracetamol ADME"/>
</dbReference>
<dbReference type="PRO" id="PR:Q54LT7"/>
<dbReference type="Proteomes" id="UP000002195">
    <property type="component" value="Chromosome 4"/>
</dbReference>
<dbReference type="GO" id="GO:0016020">
    <property type="term" value="C:membrane"/>
    <property type="evidence" value="ECO:0007669"/>
    <property type="project" value="UniProtKB-SubCell"/>
</dbReference>
<dbReference type="GO" id="GO:0020037">
    <property type="term" value="F:heme binding"/>
    <property type="evidence" value="ECO:0007669"/>
    <property type="project" value="InterPro"/>
</dbReference>
<dbReference type="GO" id="GO:0005506">
    <property type="term" value="F:iron ion binding"/>
    <property type="evidence" value="ECO:0007669"/>
    <property type="project" value="InterPro"/>
</dbReference>
<dbReference type="GO" id="GO:0004497">
    <property type="term" value="F:monooxygenase activity"/>
    <property type="evidence" value="ECO:0007669"/>
    <property type="project" value="UniProtKB-KW"/>
</dbReference>
<dbReference type="GO" id="GO:0016705">
    <property type="term" value="F:oxidoreductase activity, acting on paired donors, with incorporation or reduction of molecular oxygen"/>
    <property type="evidence" value="ECO:0007669"/>
    <property type="project" value="InterPro"/>
</dbReference>
<dbReference type="GO" id="GO:1902351">
    <property type="term" value="P:response to imidacloprid"/>
    <property type="evidence" value="ECO:0000270"/>
    <property type="project" value="dictyBase"/>
</dbReference>
<dbReference type="CDD" id="cd20617">
    <property type="entry name" value="CYP1_2-like"/>
    <property type="match status" value="1"/>
</dbReference>
<dbReference type="FunFam" id="1.10.630.10:FF:000068">
    <property type="entry name" value="Probable cytochrome P450 508A2"/>
    <property type="match status" value="1"/>
</dbReference>
<dbReference type="Gene3D" id="1.10.630.10">
    <property type="entry name" value="Cytochrome P450"/>
    <property type="match status" value="1"/>
</dbReference>
<dbReference type="InterPro" id="IPR001128">
    <property type="entry name" value="Cyt_P450"/>
</dbReference>
<dbReference type="InterPro" id="IPR017972">
    <property type="entry name" value="Cyt_P450_CS"/>
</dbReference>
<dbReference type="InterPro" id="IPR002401">
    <property type="entry name" value="Cyt_P450_E_grp-I"/>
</dbReference>
<dbReference type="InterPro" id="IPR036396">
    <property type="entry name" value="Cyt_P450_sf"/>
</dbReference>
<dbReference type="PANTHER" id="PTHR24303:SF31">
    <property type="entry name" value="CYTOCHROME P450 307A1-RELATED"/>
    <property type="match status" value="1"/>
</dbReference>
<dbReference type="PANTHER" id="PTHR24303">
    <property type="entry name" value="HEME-BINDING MONOOXYGENASE FAMILY"/>
    <property type="match status" value="1"/>
</dbReference>
<dbReference type="Pfam" id="PF00067">
    <property type="entry name" value="p450"/>
    <property type="match status" value="1"/>
</dbReference>
<dbReference type="PRINTS" id="PR00463">
    <property type="entry name" value="EP450I"/>
</dbReference>
<dbReference type="PRINTS" id="PR00385">
    <property type="entry name" value="P450"/>
</dbReference>
<dbReference type="SUPFAM" id="SSF48264">
    <property type="entry name" value="Cytochrome P450"/>
    <property type="match status" value="1"/>
</dbReference>
<dbReference type="PROSITE" id="PS00086">
    <property type="entry name" value="CYTOCHROME_P450"/>
    <property type="match status" value="1"/>
</dbReference>
<gene>
    <name type="primary">cyp519E1</name>
    <name type="ORF">DDB_G0286419</name>
</gene>
<proteinExistence type="inferred from homology"/>
<sequence length="506" mass="57750">MGIGLIILYLLIGLLAYDFTKKNKKISKNDPKQPLAIPVLGHLHLFGSQPHRSLTELAKKFGGIFTLWMGDERSMVITDPNILRELYVKNHLNFYNRASSESIRIYSGNLVDISFSVGESWKNRRRYVSAALTKTKVLNVITLIEEQANFLINSMQYYAKSGEPFFPHKYYNKYTMNIVMSIGFSKTISENESVEEGPISQLIIPFYNILENLGSGNLGDYVWYTQPFFYFKNKKLEQDTKKVYTFLEEIYNEHIKNLDESNPRDLMDQLIISTGGKEKDMVIHVSTDFLLAGSDTNASTLEWFCIFLANNPEIQKKAYEELISVVGKDCKAVTTKYRDDCPYLVGAIKETLRMRTPAPLSLIRVSEEDFMTSGGIFIPKGTQIVPNLYGIGQNFVDDPSSYKPERWVEYYKNKTPTREMEATTETKSNITTEILPNDLDKVVLPFSIGPRNCPGNIISEINLFLACSNILLNFEFSNGGKKIDETEVFGITIHPKDFSIQLKKRE</sequence>
<name>C519E_DICDI</name>
<keyword id="KW-0349">Heme</keyword>
<keyword id="KW-0408">Iron</keyword>
<keyword id="KW-0472">Membrane</keyword>
<keyword id="KW-0479">Metal-binding</keyword>
<keyword id="KW-0503">Monooxygenase</keyword>
<keyword id="KW-0560">Oxidoreductase</keyword>
<keyword id="KW-1185">Reference proteome</keyword>
<keyword id="KW-0812">Transmembrane</keyword>
<keyword id="KW-1133">Transmembrane helix</keyword>